<evidence type="ECO:0000255" key="1">
    <source>
        <dbReference type="HAMAP-Rule" id="MF_00262"/>
    </source>
</evidence>
<protein>
    <recommendedName>
        <fullName evidence="1">Cell division topological specificity factor</fullName>
    </recommendedName>
</protein>
<gene>
    <name evidence="1" type="primary">minE</name>
    <name type="ordered locus">HPP12_0329</name>
</gene>
<dbReference type="EMBL" id="CP001217">
    <property type="protein sequence ID" value="ACJ07486.1"/>
    <property type="molecule type" value="Genomic_DNA"/>
</dbReference>
<dbReference type="SMR" id="B6JKQ8"/>
<dbReference type="KEGG" id="hpp:HPP12_0329"/>
<dbReference type="HOGENOM" id="CLU_137929_2_1_7"/>
<dbReference type="Proteomes" id="UP000008198">
    <property type="component" value="Chromosome"/>
</dbReference>
<dbReference type="GO" id="GO:0051301">
    <property type="term" value="P:cell division"/>
    <property type="evidence" value="ECO:0007669"/>
    <property type="project" value="UniProtKB-KW"/>
</dbReference>
<dbReference type="GO" id="GO:0032955">
    <property type="term" value="P:regulation of division septum assembly"/>
    <property type="evidence" value="ECO:0007669"/>
    <property type="project" value="InterPro"/>
</dbReference>
<dbReference type="Gene3D" id="3.30.1070.10">
    <property type="entry name" value="Cell division topological specificity factor MinE"/>
    <property type="match status" value="1"/>
</dbReference>
<dbReference type="HAMAP" id="MF_00262">
    <property type="entry name" value="MinE"/>
    <property type="match status" value="1"/>
</dbReference>
<dbReference type="InterPro" id="IPR005527">
    <property type="entry name" value="MinE"/>
</dbReference>
<dbReference type="InterPro" id="IPR036707">
    <property type="entry name" value="MinE_sf"/>
</dbReference>
<dbReference type="NCBIfam" id="TIGR01215">
    <property type="entry name" value="minE"/>
    <property type="match status" value="1"/>
</dbReference>
<dbReference type="NCBIfam" id="NF001422">
    <property type="entry name" value="PRK00296.1"/>
    <property type="match status" value="1"/>
</dbReference>
<dbReference type="Pfam" id="PF03776">
    <property type="entry name" value="MinE"/>
    <property type="match status" value="1"/>
</dbReference>
<dbReference type="SUPFAM" id="SSF55229">
    <property type="entry name" value="Cell division protein MinE topological specificity domain"/>
    <property type="match status" value="1"/>
</dbReference>
<sequence>MSLFDFFKNKGSAATATDRLKLILAKERTLNLPYMEEMRKEIIAVIQKYTKSSDIHFKTLDSNQSVETIEVEIILPK</sequence>
<reference key="1">
    <citation type="submission" date="2008-10" db="EMBL/GenBank/DDBJ databases">
        <title>The complete genome sequence of Helicobacter pylori strain P12.</title>
        <authorList>
            <person name="Fischer W."/>
            <person name="Windhager L."/>
            <person name="Karnholz A."/>
            <person name="Zeiller M."/>
            <person name="Zimmer R."/>
            <person name="Haas R."/>
        </authorList>
    </citation>
    <scope>NUCLEOTIDE SEQUENCE [LARGE SCALE GENOMIC DNA]</scope>
    <source>
        <strain>P12</strain>
    </source>
</reference>
<keyword id="KW-0131">Cell cycle</keyword>
<keyword id="KW-0132">Cell division</keyword>
<organism>
    <name type="scientific">Helicobacter pylori (strain P12)</name>
    <dbReference type="NCBI Taxonomy" id="570508"/>
    <lineage>
        <taxon>Bacteria</taxon>
        <taxon>Pseudomonadati</taxon>
        <taxon>Campylobacterota</taxon>
        <taxon>Epsilonproteobacteria</taxon>
        <taxon>Campylobacterales</taxon>
        <taxon>Helicobacteraceae</taxon>
        <taxon>Helicobacter</taxon>
    </lineage>
</organism>
<feature type="chain" id="PRO_1000114223" description="Cell division topological specificity factor">
    <location>
        <begin position="1"/>
        <end position="77"/>
    </location>
</feature>
<proteinExistence type="inferred from homology"/>
<name>MINE_HELP2</name>
<comment type="function">
    <text evidence="1">Prevents the cell division inhibition by proteins MinC and MinD at internal division sites while permitting inhibition at polar sites. This ensures cell division at the proper site by restricting the formation of a division septum at the midpoint of the long axis of the cell.</text>
</comment>
<comment type="similarity">
    <text evidence="1">Belongs to the MinE family.</text>
</comment>
<accession>B6JKQ8</accession>